<sequence length="8" mass="1034">TDRNFLRL</sequence>
<evidence type="ECO:0000250" key="1">
    <source>
        <dbReference type="UniProtKB" id="P34405"/>
    </source>
</evidence>
<evidence type="ECO:0000255" key="2"/>
<evidence type="ECO:0000269" key="3">
    <source>
    </source>
</evidence>
<evidence type="ECO:0000303" key="4">
    <source>
    </source>
</evidence>
<evidence type="ECO:0000305" key="5"/>
<evidence type="ECO:0000305" key="6">
    <source>
    </source>
</evidence>
<accession>B3A066</accession>
<keyword id="KW-0027">Amidation</keyword>
<keyword id="KW-0903">Direct protein sequencing</keyword>
<keyword id="KW-0527">Neuropeptide</keyword>
<keyword id="KW-0964">Secreted</keyword>
<feature type="peptide" id="PRO_0000421514" description="Extended FMRFamide-5" evidence="3">
    <location>
        <begin position="1"/>
        <end position="8"/>
    </location>
</feature>
<feature type="modified residue" description="Leucine amide" evidence="3">
    <location>
        <position position="8"/>
    </location>
</feature>
<feature type="unsure residue" description="L or I" evidence="3">
    <location>
        <position position="6"/>
    </location>
</feature>
<feature type="unsure residue" description="L or I" evidence="3">
    <location>
        <position position="8"/>
    </location>
</feature>
<protein>
    <recommendedName>
        <fullName evidence="4">Extended FMRFamide-5</fullName>
        <shortName evidence="4">FMRFa-5</shortName>
    </recommendedName>
</protein>
<name>FAR5_KARBI</name>
<organism>
    <name type="scientific">Karoophasma biedouwense</name>
    <name type="common">Gladiator</name>
    <name type="synonym">Heel-walker</name>
    <dbReference type="NCBI Taxonomy" id="253133"/>
    <lineage>
        <taxon>Eukaryota</taxon>
        <taxon>Metazoa</taxon>
        <taxon>Ecdysozoa</taxon>
        <taxon>Arthropoda</taxon>
        <taxon>Hexapoda</taxon>
        <taxon>Insecta</taxon>
        <taxon>Pterygota</taxon>
        <taxon>Neoptera</taxon>
        <taxon>Polyneoptera</taxon>
        <taxon>Mantophasmatodea</taxon>
        <taxon>Austrophasmatidae</taxon>
        <taxon>Karoophasma</taxon>
    </lineage>
</organism>
<dbReference type="GO" id="GO:0005576">
    <property type="term" value="C:extracellular region"/>
    <property type="evidence" value="ECO:0007669"/>
    <property type="project" value="UniProtKB-SubCell"/>
</dbReference>
<dbReference type="GO" id="GO:0007218">
    <property type="term" value="P:neuropeptide signaling pathway"/>
    <property type="evidence" value="ECO:0007669"/>
    <property type="project" value="UniProtKB-KW"/>
</dbReference>
<proteinExistence type="evidence at protein level"/>
<comment type="function">
    <text evidence="1">FMRFamides and FMRFamide-like peptides are neuropeptides.</text>
</comment>
<comment type="subcellular location">
    <subcellularLocation>
        <location evidence="6">Secreted</location>
    </subcellularLocation>
</comment>
<comment type="similarity">
    <text evidence="2">Belongs to the FARP (FMRF amide related peptide) family.</text>
</comment>
<reference evidence="5" key="1">
    <citation type="journal article" date="2012" name="Syst. Biol.">
        <title>Peptidomics-based phylogeny and biogeography of Mantophasmatodea (Hexapoda).</title>
        <authorList>
            <person name="Predel R."/>
            <person name="Neupert S."/>
            <person name="Huetteroth W."/>
            <person name="Kahnt J."/>
            <person name="Waidelich D."/>
            <person name="Roth S."/>
        </authorList>
    </citation>
    <scope>PROTEIN SEQUENCE</scope>
    <scope>AMIDATION AT LEU-8</scope>
    <source>
        <tissue evidence="3">Thoracic perisympathetic organs</tissue>
    </source>
</reference>